<protein>
    <recommendedName>
        <fullName evidence="1">N(2)-fixation sustaining protein CowN</fullName>
    </recommendedName>
    <alternativeName>
        <fullName evidence="1">CO weal-nitrogenase</fullName>
    </alternativeName>
</protein>
<gene>
    <name evidence="1" type="primary">cowN</name>
    <name type="ordered locus">Daro_1088</name>
</gene>
<comment type="function">
    <text evidence="1">Is required to sustain N(2)-dependent growth in the presence of low levels of carbon monoxide (CO). Probably acts by protecting the N(2) fixation ability of the nitrogenase complex, which is inactivated in the presence of CO.</text>
</comment>
<comment type="similarity">
    <text evidence="1">Belongs to the CowN family.</text>
</comment>
<evidence type="ECO:0000255" key="1">
    <source>
        <dbReference type="HAMAP-Rule" id="MF_02117"/>
    </source>
</evidence>
<sequence length="98" mass="11425">MPQDCACRKTDRYVSFQDIDCTGNARRLMEHLDRQLSIPGRSTAFWEYFAKKRAGSAAAKPDDLFLIHSNINQFREFFEQWNDSDALSLLLQIEEECC</sequence>
<keyword id="KW-0535">Nitrogen fixation</keyword>
<reference key="1">
    <citation type="journal article" date="2009" name="BMC Genomics">
        <title>Metabolic analysis of the soil microbe Dechloromonas aromatica str. RCB: indications of a surprisingly complex life-style and cryptic anaerobic pathways for aromatic degradation.</title>
        <authorList>
            <person name="Salinero K.K."/>
            <person name="Keller K."/>
            <person name="Feil W.S."/>
            <person name="Feil H."/>
            <person name="Trong S."/>
            <person name="Di Bartolo G."/>
            <person name="Lapidus A."/>
        </authorList>
    </citation>
    <scope>NUCLEOTIDE SEQUENCE [LARGE SCALE GENOMIC DNA]</scope>
    <source>
        <strain>RCB</strain>
    </source>
</reference>
<accession>Q47H37</accession>
<feature type="chain" id="PRO_0000407254" description="N(2)-fixation sustaining protein CowN">
    <location>
        <begin position="1"/>
        <end position="98"/>
    </location>
</feature>
<proteinExistence type="inferred from homology"/>
<name>COWN_DECAR</name>
<dbReference type="EMBL" id="CP000089">
    <property type="protein sequence ID" value="AAZ45844.1"/>
    <property type="molecule type" value="Genomic_DNA"/>
</dbReference>
<dbReference type="STRING" id="159087.Daro_1088"/>
<dbReference type="KEGG" id="dar:Daro_1088"/>
<dbReference type="eggNOG" id="ENOG50330SG">
    <property type="taxonomic scope" value="Bacteria"/>
</dbReference>
<dbReference type="HOGENOM" id="CLU_149349_0_0_4"/>
<dbReference type="OrthoDB" id="7689335at2"/>
<dbReference type="GO" id="GO:0009399">
    <property type="term" value="P:nitrogen fixation"/>
    <property type="evidence" value="ECO:0007669"/>
    <property type="project" value="UniProtKB-UniRule"/>
</dbReference>
<dbReference type="HAMAP" id="MF_02117">
    <property type="entry name" value="CowN"/>
    <property type="match status" value="1"/>
</dbReference>
<dbReference type="InterPro" id="IPR024899">
    <property type="entry name" value="CowN"/>
</dbReference>
<dbReference type="NCBIfam" id="NF033689">
    <property type="entry name" value="N2Fix_CO_CowN"/>
    <property type="match status" value="1"/>
</dbReference>
<dbReference type="Pfam" id="PF20543">
    <property type="entry name" value="CowN"/>
    <property type="match status" value="1"/>
</dbReference>
<organism>
    <name type="scientific">Dechloromonas aromatica (strain RCB)</name>
    <dbReference type="NCBI Taxonomy" id="159087"/>
    <lineage>
        <taxon>Bacteria</taxon>
        <taxon>Pseudomonadati</taxon>
        <taxon>Pseudomonadota</taxon>
        <taxon>Betaproteobacteria</taxon>
        <taxon>Rhodocyclales</taxon>
        <taxon>Azonexaceae</taxon>
        <taxon>Dechloromonas</taxon>
    </lineage>
</organism>